<dbReference type="EC" id="4.6.1.17" evidence="1"/>
<dbReference type="EMBL" id="AE017262">
    <property type="protein sequence ID" value="AAT03844.1"/>
    <property type="molecule type" value="Genomic_DNA"/>
</dbReference>
<dbReference type="RefSeq" id="WP_003725558.1">
    <property type="nucleotide sequence ID" value="NC_002973.6"/>
</dbReference>
<dbReference type="SMR" id="Q721C0"/>
<dbReference type="GeneID" id="86844941"/>
<dbReference type="KEGG" id="lmf:LMOf2365_1067"/>
<dbReference type="HOGENOM" id="CLU_074693_1_1_9"/>
<dbReference type="UniPathway" id="UPA00344"/>
<dbReference type="GO" id="GO:0061799">
    <property type="term" value="F:cyclic pyranopterin monophosphate synthase activity"/>
    <property type="evidence" value="ECO:0007669"/>
    <property type="project" value="UniProtKB-UniRule"/>
</dbReference>
<dbReference type="GO" id="GO:0006777">
    <property type="term" value="P:Mo-molybdopterin cofactor biosynthetic process"/>
    <property type="evidence" value="ECO:0007669"/>
    <property type="project" value="UniProtKB-UniRule"/>
</dbReference>
<dbReference type="CDD" id="cd01420">
    <property type="entry name" value="MoaC_PE"/>
    <property type="match status" value="1"/>
</dbReference>
<dbReference type="Gene3D" id="3.30.70.640">
    <property type="entry name" value="Molybdopterin cofactor biosynthesis C (MoaC) domain"/>
    <property type="match status" value="1"/>
</dbReference>
<dbReference type="HAMAP" id="MF_01224_B">
    <property type="entry name" value="MoaC_B"/>
    <property type="match status" value="1"/>
</dbReference>
<dbReference type="InterPro" id="IPR023045">
    <property type="entry name" value="MoaC"/>
</dbReference>
<dbReference type="InterPro" id="IPR047594">
    <property type="entry name" value="MoaC_bact/euk"/>
</dbReference>
<dbReference type="InterPro" id="IPR036522">
    <property type="entry name" value="MoaC_sf"/>
</dbReference>
<dbReference type="InterPro" id="IPR050105">
    <property type="entry name" value="MoCo_biosynth_MoaA/MoaC"/>
</dbReference>
<dbReference type="InterPro" id="IPR002820">
    <property type="entry name" value="Mopterin_CF_biosynth-C_dom"/>
</dbReference>
<dbReference type="NCBIfam" id="TIGR00581">
    <property type="entry name" value="moaC"/>
    <property type="match status" value="1"/>
</dbReference>
<dbReference type="NCBIfam" id="NF006870">
    <property type="entry name" value="PRK09364.1"/>
    <property type="match status" value="1"/>
</dbReference>
<dbReference type="PANTHER" id="PTHR22960:SF29">
    <property type="entry name" value="CYCLIC PYRANOPTERIN MONOPHOSPHATE SYNTHASE"/>
    <property type="match status" value="1"/>
</dbReference>
<dbReference type="PANTHER" id="PTHR22960">
    <property type="entry name" value="MOLYBDOPTERIN COFACTOR SYNTHESIS PROTEIN A"/>
    <property type="match status" value="1"/>
</dbReference>
<dbReference type="Pfam" id="PF01967">
    <property type="entry name" value="MoaC"/>
    <property type="match status" value="1"/>
</dbReference>
<dbReference type="SUPFAM" id="SSF55040">
    <property type="entry name" value="Molybdenum cofactor biosynthesis protein C, MoaC"/>
    <property type="match status" value="1"/>
</dbReference>
<accession>Q721C0</accession>
<proteinExistence type="inferred from homology"/>
<reference key="1">
    <citation type="journal article" date="2004" name="Nucleic Acids Res.">
        <title>Whole genome comparisons of serotype 4b and 1/2a strains of the food-borne pathogen Listeria monocytogenes reveal new insights into the core genome components of this species.</title>
        <authorList>
            <person name="Nelson K.E."/>
            <person name="Fouts D.E."/>
            <person name="Mongodin E.F."/>
            <person name="Ravel J."/>
            <person name="DeBoy R.T."/>
            <person name="Kolonay J.F."/>
            <person name="Rasko D.A."/>
            <person name="Angiuoli S.V."/>
            <person name="Gill S.R."/>
            <person name="Paulsen I.T."/>
            <person name="Peterson J.D."/>
            <person name="White O."/>
            <person name="Nelson W.C."/>
            <person name="Nierman W.C."/>
            <person name="Beanan M.J."/>
            <person name="Brinkac L.M."/>
            <person name="Daugherty S.C."/>
            <person name="Dodson R.J."/>
            <person name="Durkin A.S."/>
            <person name="Madupu R."/>
            <person name="Haft D.H."/>
            <person name="Selengut J."/>
            <person name="Van Aken S.E."/>
            <person name="Khouri H.M."/>
            <person name="Fedorova N."/>
            <person name="Forberger H.A."/>
            <person name="Tran B."/>
            <person name="Kathariou S."/>
            <person name="Wonderling L.D."/>
            <person name="Uhlich G.A."/>
            <person name="Bayles D.O."/>
            <person name="Luchansky J.B."/>
            <person name="Fraser C.M."/>
        </authorList>
    </citation>
    <scope>NUCLEOTIDE SEQUENCE [LARGE SCALE GENOMIC DNA]</scope>
    <source>
        <strain>F2365</strain>
    </source>
</reference>
<name>MOAC_LISMF</name>
<organism>
    <name type="scientific">Listeria monocytogenes serotype 4b (strain F2365)</name>
    <dbReference type="NCBI Taxonomy" id="265669"/>
    <lineage>
        <taxon>Bacteria</taxon>
        <taxon>Bacillati</taxon>
        <taxon>Bacillota</taxon>
        <taxon>Bacilli</taxon>
        <taxon>Bacillales</taxon>
        <taxon>Listeriaceae</taxon>
        <taxon>Listeria</taxon>
    </lineage>
</organism>
<sequence length="160" mass="17337">MEKDDLTHFNDEKRAKMVDVTSKSETKRRAIARATIHMNEETLARIHAGKIAKGDVLAVAQVAGIMAAKKTSELIPMCHPIMTTKADISFEDDGKTALTITSEVVTVGKTGVEMEALTAVTIAALTIYDMCKAMDKGMRIEKTYLVEKTGGKSGTFKAEA</sequence>
<comment type="function">
    <text evidence="1">Catalyzes the conversion of (8S)-3',8-cyclo-7,8-dihydroguanosine 5'-triphosphate to cyclic pyranopterin monophosphate (cPMP).</text>
</comment>
<comment type="catalytic activity">
    <reaction evidence="1">
        <text>(8S)-3',8-cyclo-7,8-dihydroguanosine 5'-triphosphate = cyclic pyranopterin phosphate + diphosphate</text>
        <dbReference type="Rhea" id="RHEA:49580"/>
        <dbReference type="ChEBI" id="CHEBI:33019"/>
        <dbReference type="ChEBI" id="CHEBI:59648"/>
        <dbReference type="ChEBI" id="CHEBI:131766"/>
        <dbReference type="EC" id="4.6.1.17"/>
    </reaction>
</comment>
<comment type="pathway">
    <text evidence="1">Cofactor biosynthesis; molybdopterin biosynthesis.</text>
</comment>
<comment type="subunit">
    <text evidence="1">Homohexamer; trimer of dimers.</text>
</comment>
<comment type="similarity">
    <text evidence="1">Belongs to the MoaC family.</text>
</comment>
<evidence type="ECO:0000255" key="1">
    <source>
        <dbReference type="HAMAP-Rule" id="MF_01224"/>
    </source>
</evidence>
<gene>
    <name evidence="1" type="primary">moaC</name>
    <name type="ordered locus">LMOf2365_1067</name>
</gene>
<feature type="chain" id="PRO_0000097808" description="Cyclic pyranopterin monophosphate synthase">
    <location>
        <begin position="1"/>
        <end position="160"/>
    </location>
</feature>
<feature type="active site" evidence="1">
    <location>
        <position position="129"/>
    </location>
</feature>
<feature type="binding site" evidence="1">
    <location>
        <begin position="77"/>
        <end position="79"/>
    </location>
    <ligand>
        <name>substrate</name>
    </ligand>
</feature>
<feature type="binding site" evidence="1">
    <location>
        <begin position="114"/>
        <end position="115"/>
    </location>
    <ligand>
        <name>substrate</name>
    </ligand>
</feature>
<keyword id="KW-0456">Lyase</keyword>
<keyword id="KW-0501">Molybdenum cofactor biosynthesis</keyword>
<protein>
    <recommendedName>
        <fullName evidence="1">Cyclic pyranopterin monophosphate synthase</fullName>
        <ecNumber evidence="1">4.6.1.17</ecNumber>
    </recommendedName>
    <alternativeName>
        <fullName evidence="1">Molybdenum cofactor biosynthesis protein C</fullName>
    </alternativeName>
</protein>